<dbReference type="EMBL" id="FO080736">
    <property type="protein sequence ID" value="CCD66289.1"/>
    <property type="molecule type" value="Genomic_DNA"/>
</dbReference>
<dbReference type="PIR" id="T29528">
    <property type="entry name" value="T29528"/>
</dbReference>
<dbReference type="RefSeq" id="NP_491595.1">
    <property type="nucleotide sequence ID" value="NM_059194.6"/>
</dbReference>
<dbReference type="FunCoup" id="P91285">
    <property type="interactions" value="95"/>
</dbReference>
<dbReference type="STRING" id="6239.F27C1.8.1"/>
<dbReference type="PaxDb" id="6239-F27C1.8"/>
<dbReference type="PeptideAtlas" id="P91285"/>
<dbReference type="EnsemblMetazoa" id="F27C1.8.1">
    <property type="protein sequence ID" value="F27C1.8.1"/>
    <property type="gene ID" value="WBGene00001067"/>
</dbReference>
<dbReference type="GeneID" id="172197"/>
<dbReference type="KEGG" id="cel:CELE_F27C1.8"/>
<dbReference type="UCSC" id="F27C1.8.1">
    <property type="organism name" value="c. elegans"/>
</dbReference>
<dbReference type="AGR" id="WB:WBGene00001067"/>
<dbReference type="CTD" id="172197"/>
<dbReference type="WormBase" id="F27C1.8">
    <property type="protein sequence ID" value="CE09720"/>
    <property type="gene ID" value="WBGene00001067"/>
    <property type="gene designation" value="dpy-5"/>
</dbReference>
<dbReference type="eggNOG" id="KOG3544">
    <property type="taxonomic scope" value="Eukaryota"/>
</dbReference>
<dbReference type="HOGENOM" id="CLU_001074_4_3_1"/>
<dbReference type="InParanoid" id="P91285"/>
<dbReference type="OMA" id="QYVRGIF"/>
<dbReference type="OrthoDB" id="5983381at2759"/>
<dbReference type="PhylomeDB" id="P91285"/>
<dbReference type="PRO" id="PR:P91285"/>
<dbReference type="Proteomes" id="UP000001940">
    <property type="component" value="Chromosome I"/>
</dbReference>
<dbReference type="Bgee" id="WBGene00001067">
    <property type="expression patterns" value="Expressed in material anatomical entity and 3 other cell types or tissues"/>
</dbReference>
<dbReference type="GO" id="GO:0005581">
    <property type="term" value="C:collagen trimer"/>
    <property type="evidence" value="ECO:0007669"/>
    <property type="project" value="UniProtKB-KW"/>
</dbReference>
<dbReference type="GO" id="GO:0060102">
    <property type="term" value="C:cuticular extracellular matrix"/>
    <property type="evidence" value="ECO:0000314"/>
    <property type="project" value="WormBase"/>
</dbReference>
<dbReference type="GO" id="GO:0042329">
    <property type="term" value="F:structural constituent of collagen and cuticulin-based cuticle"/>
    <property type="evidence" value="ECO:0000314"/>
    <property type="project" value="WormBase"/>
</dbReference>
<dbReference type="GO" id="GO:0040002">
    <property type="term" value="P:collagen and cuticulin-based cuticle development"/>
    <property type="evidence" value="ECO:0000315"/>
    <property type="project" value="WormBase"/>
</dbReference>
<dbReference type="GO" id="GO:0042338">
    <property type="term" value="P:cuticle development involved in collagen and cuticulin-based cuticle molting cycle"/>
    <property type="evidence" value="ECO:0000315"/>
    <property type="project" value="WormBase"/>
</dbReference>
<dbReference type="GO" id="GO:0040032">
    <property type="term" value="P:post-embryonic body morphogenesis"/>
    <property type="evidence" value="ECO:0000315"/>
    <property type="project" value="WormBase"/>
</dbReference>
<dbReference type="InterPro" id="IPR002486">
    <property type="entry name" value="Col_cuticle_N"/>
</dbReference>
<dbReference type="InterPro" id="IPR008160">
    <property type="entry name" value="Collagen"/>
</dbReference>
<dbReference type="PANTHER" id="PTHR24637">
    <property type="entry name" value="COLLAGEN"/>
    <property type="match status" value="1"/>
</dbReference>
<dbReference type="PANTHER" id="PTHR24637:SF257">
    <property type="entry name" value="CUTICLE COLLAGEN DPY-5"/>
    <property type="match status" value="1"/>
</dbReference>
<dbReference type="Pfam" id="PF01484">
    <property type="entry name" value="Col_cuticle_N"/>
    <property type="match status" value="1"/>
</dbReference>
<dbReference type="Pfam" id="PF01391">
    <property type="entry name" value="Collagen"/>
    <property type="match status" value="1"/>
</dbReference>
<dbReference type="SMART" id="SM01088">
    <property type="entry name" value="Col_cuticle_N"/>
    <property type="match status" value="1"/>
</dbReference>
<gene>
    <name type="primary">dpy-5</name>
    <name type="ORF">F27C1.8</name>
</gene>
<reference key="1">
    <citation type="journal article" date="1998" name="Science">
        <title>Genome sequence of the nematode C. elegans: a platform for investigating biology.</title>
        <authorList>
            <consortium name="The C. elegans sequencing consortium"/>
        </authorList>
    </citation>
    <scope>NUCLEOTIDE SEQUENCE [LARGE SCALE GENOMIC DNA]</scope>
    <source>
        <strain>Bristol N2</strain>
    </source>
</reference>
<reference key="2">
    <citation type="online journal article" date="1997" name="Worm Breeder's Gazette">
        <title>dpy-5 encodes a cuticle collagen.</title>
        <authorList>
            <person name="Thacker C.M."/>
            <person name="Rose A.M."/>
        </authorList>
        <locator>15(1):54</locator>
    </citation>
    <scope>IDENTIFICATION</scope>
</reference>
<organism>
    <name type="scientific">Caenorhabditis elegans</name>
    <dbReference type="NCBI Taxonomy" id="6239"/>
    <lineage>
        <taxon>Eukaryota</taxon>
        <taxon>Metazoa</taxon>
        <taxon>Ecdysozoa</taxon>
        <taxon>Nematoda</taxon>
        <taxon>Chromadorea</taxon>
        <taxon>Rhabditida</taxon>
        <taxon>Rhabditina</taxon>
        <taxon>Rhabditomorpha</taxon>
        <taxon>Rhabditoidea</taxon>
        <taxon>Rhabditidae</taxon>
        <taxon>Peloderinae</taxon>
        <taxon>Caenorhabditis</taxon>
    </lineage>
</organism>
<feature type="chain" id="PRO_0000127597" description="Cuticle collagen dpy-5">
    <location>
        <begin position="1"/>
        <end position="284"/>
    </location>
</feature>
<feature type="region of interest" description="Disordered" evidence="2">
    <location>
        <begin position="88"/>
        <end position="284"/>
    </location>
</feature>
<feature type="region of interest" description="Triple-helical region">
    <location>
        <begin position="94"/>
        <end position="126"/>
    </location>
</feature>
<feature type="region of interest" description="Triple-helical region">
    <location>
        <begin position="143"/>
        <end position="270"/>
    </location>
</feature>
<feature type="compositionally biased region" description="Gly residues" evidence="2">
    <location>
        <begin position="106"/>
        <end position="115"/>
    </location>
</feature>
<feature type="compositionally biased region" description="Basic and acidic residues" evidence="2">
    <location>
        <begin position="163"/>
        <end position="177"/>
    </location>
</feature>
<feature type="compositionally biased region" description="Low complexity" evidence="2">
    <location>
        <begin position="181"/>
        <end position="193"/>
    </location>
</feature>
<feature type="compositionally biased region" description="Low complexity" evidence="2">
    <location>
        <begin position="224"/>
        <end position="246"/>
    </location>
</feature>
<feature type="compositionally biased region" description="Low complexity" evidence="2">
    <location>
        <begin position="255"/>
        <end position="271"/>
    </location>
</feature>
<keyword id="KW-0176">Collagen</keyword>
<keyword id="KW-0193">Cuticle</keyword>
<keyword id="KW-1015">Disulfide bond</keyword>
<keyword id="KW-1185">Reference proteome</keyword>
<keyword id="KW-0677">Repeat</keyword>
<protein>
    <recommendedName>
        <fullName>Cuticle collagen dpy-5</fullName>
    </recommendedName>
    <alternativeName>
        <fullName>Protein dumpy-5</fullName>
    </alternativeName>
</protein>
<comment type="function">
    <text>Nematode cuticles are composed largely of collagen-like proteins. The cuticle functions both as an exoskeleton and as a barrier to protect the worm from its environment.</text>
</comment>
<comment type="subunit">
    <text evidence="1">Collagen polypeptide chains are complexed within the cuticle by disulfide bonds and other types of covalent cross-links.</text>
</comment>
<comment type="PTM">
    <text>May be a substrate of bli-4.</text>
</comment>
<comment type="similarity">
    <text evidence="3">Belongs to the cuticular collagen family.</text>
</comment>
<evidence type="ECO:0000250" key="1"/>
<evidence type="ECO:0000256" key="2">
    <source>
        <dbReference type="SAM" id="MobiDB-lite"/>
    </source>
</evidence>
<evidence type="ECO:0000305" key="3"/>
<accession>P91285</accession>
<proteinExistence type="inferred from homology"/>
<name>DPY5_CAEEL</name>
<sequence length="284" mass="28216">MVKAVVGFGAACGISAIVACLWAALVITNDINDMYDDVMGELGGFRDISDDTWGTLLDVRHGAGESAEQYVRGIFGRHKRSNSQCSCGLPSQGCPAGAPGNPGAPGEPGGTGPDGKNGPTGLPGLNIPIPNDFPKECIKCPAGPPGQDGLPGQEGFQGLPGDAGKRGTPGKDGEPGRVGDIGDQGTPGQDGQPGLAGPPGRDGLTGKGQPGVAGRPGMPGPRGEPGNNGNPGEEGQTGAQGPTGQPGKDGFNGNDGTPGQAGPQGAVGADAEYCPCPERKRRRV</sequence>